<accession>A0QX88</accession>
<accession>I7GAR0</accession>
<reference key="1">
    <citation type="submission" date="2006-10" db="EMBL/GenBank/DDBJ databases">
        <authorList>
            <person name="Fleischmann R.D."/>
            <person name="Dodson R.J."/>
            <person name="Haft D.H."/>
            <person name="Merkel J.S."/>
            <person name="Nelson W.C."/>
            <person name="Fraser C.M."/>
        </authorList>
    </citation>
    <scope>NUCLEOTIDE SEQUENCE [LARGE SCALE GENOMIC DNA]</scope>
    <source>
        <strain>ATCC 700084 / mc(2)155</strain>
    </source>
</reference>
<reference key="2">
    <citation type="journal article" date="2007" name="Genome Biol.">
        <title>Interrupted coding sequences in Mycobacterium smegmatis: authentic mutations or sequencing errors?</title>
        <authorList>
            <person name="Deshayes C."/>
            <person name="Perrodou E."/>
            <person name="Gallien S."/>
            <person name="Euphrasie D."/>
            <person name="Schaeffer C."/>
            <person name="Van-Dorsselaer A."/>
            <person name="Poch O."/>
            <person name="Lecompte O."/>
            <person name="Reyrat J.-M."/>
        </authorList>
    </citation>
    <scope>NUCLEOTIDE SEQUENCE [LARGE SCALE GENOMIC DNA]</scope>
    <source>
        <strain>ATCC 700084 / mc(2)155</strain>
    </source>
</reference>
<reference key="3">
    <citation type="journal article" date="2009" name="Genome Res.">
        <title>Ortho-proteogenomics: multiple proteomes investigation through orthology and a new MS-based protocol.</title>
        <authorList>
            <person name="Gallien S."/>
            <person name="Perrodou E."/>
            <person name="Carapito C."/>
            <person name="Deshayes C."/>
            <person name="Reyrat J.-M."/>
            <person name="Van Dorsselaer A."/>
            <person name="Poch O."/>
            <person name="Schaeffer C."/>
            <person name="Lecompte O."/>
        </authorList>
    </citation>
    <scope>NUCLEOTIDE SEQUENCE [LARGE SCALE GENOMIC DNA]</scope>
    <source>
        <strain>ATCC 700084 / mc(2)155</strain>
    </source>
</reference>
<evidence type="ECO:0000255" key="1">
    <source>
        <dbReference type="HAMAP-Rule" id="MF_01021"/>
    </source>
</evidence>
<gene>
    <name evidence="1" type="primary">hisI</name>
    <name type="ordered locus">MSMEG_3212</name>
    <name type="ordered locus">MSMEI_3130</name>
</gene>
<keyword id="KW-0028">Amino-acid biosynthesis</keyword>
<keyword id="KW-0963">Cytoplasm</keyword>
<keyword id="KW-0368">Histidine biosynthesis</keyword>
<keyword id="KW-0378">Hydrolase</keyword>
<keyword id="KW-0460">Magnesium</keyword>
<keyword id="KW-0479">Metal-binding</keyword>
<keyword id="KW-1185">Reference proteome</keyword>
<keyword id="KW-0862">Zinc</keyword>
<dbReference type="EC" id="3.5.4.19" evidence="1"/>
<dbReference type="EMBL" id="CP000480">
    <property type="protein sequence ID" value="ABK75081.1"/>
    <property type="molecule type" value="Genomic_DNA"/>
</dbReference>
<dbReference type="EMBL" id="CP001663">
    <property type="protein sequence ID" value="AFP39594.1"/>
    <property type="molecule type" value="Genomic_DNA"/>
</dbReference>
<dbReference type="RefSeq" id="WP_011728899.1">
    <property type="nucleotide sequence ID" value="NZ_SIJM01000015.1"/>
</dbReference>
<dbReference type="RefSeq" id="YP_887526.1">
    <property type="nucleotide sequence ID" value="NC_008596.1"/>
</dbReference>
<dbReference type="SMR" id="A0QX88"/>
<dbReference type="STRING" id="246196.MSMEG_3212"/>
<dbReference type="PaxDb" id="246196-MSMEI_3130"/>
<dbReference type="GeneID" id="93457981"/>
<dbReference type="KEGG" id="msb:LJ00_15970"/>
<dbReference type="KEGG" id="msg:MSMEI_3130"/>
<dbReference type="KEGG" id="msm:MSMEG_3212"/>
<dbReference type="PATRIC" id="fig|246196.19.peg.3174"/>
<dbReference type="eggNOG" id="COG0139">
    <property type="taxonomic scope" value="Bacteria"/>
</dbReference>
<dbReference type="OrthoDB" id="9795769at2"/>
<dbReference type="UniPathway" id="UPA00031">
    <property type="reaction ID" value="UER00008"/>
</dbReference>
<dbReference type="Proteomes" id="UP000000757">
    <property type="component" value="Chromosome"/>
</dbReference>
<dbReference type="Proteomes" id="UP000006158">
    <property type="component" value="Chromosome"/>
</dbReference>
<dbReference type="GO" id="GO:0005737">
    <property type="term" value="C:cytoplasm"/>
    <property type="evidence" value="ECO:0007669"/>
    <property type="project" value="UniProtKB-SubCell"/>
</dbReference>
<dbReference type="GO" id="GO:0000287">
    <property type="term" value="F:magnesium ion binding"/>
    <property type="evidence" value="ECO:0007669"/>
    <property type="project" value="UniProtKB-UniRule"/>
</dbReference>
<dbReference type="GO" id="GO:0004635">
    <property type="term" value="F:phosphoribosyl-AMP cyclohydrolase activity"/>
    <property type="evidence" value="ECO:0007669"/>
    <property type="project" value="UniProtKB-UniRule"/>
</dbReference>
<dbReference type="GO" id="GO:0008270">
    <property type="term" value="F:zinc ion binding"/>
    <property type="evidence" value="ECO:0007669"/>
    <property type="project" value="UniProtKB-UniRule"/>
</dbReference>
<dbReference type="GO" id="GO:0000105">
    <property type="term" value="P:L-histidine biosynthetic process"/>
    <property type="evidence" value="ECO:0007669"/>
    <property type="project" value="UniProtKB-UniRule"/>
</dbReference>
<dbReference type="FunFam" id="3.10.20.810:FF:000001">
    <property type="entry name" value="Histidine biosynthesis bifunctional protein HisIE"/>
    <property type="match status" value="1"/>
</dbReference>
<dbReference type="Gene3D" id="3.10.20.810">
    <property type="entry name" value="Phosphoribosyl-AMP cyclohydrolase"/>
    <property type="match status" value="1"/>
</dbReference>
<dbReference type="HAMAP" id="MF_01021">
    <property type="entry name" value="HisI"/>
    <property type="match status" value="1"/>
</dbReference>
<dbReference type="InterPro" id="IPR026660">
    <property type="entry name" value="PRA-CH"/>
</dbReference>
<dbReference type="InterPro" id="IPR002496">
    <property type="entry name" value="PRib_AMP_CycHydrolase_dom"/>
</dbReference>
<dbReference type="InterPro" id="IPR038019">
    <property type="entry name" value="PRib_AMP_CycHydrolase_sf"/>
</dbReference>
<dbReference type="NCBIfam" id="NF000768">
    <property type="entry name" value="PRK00051.1"/>
    <property type="match status" value="1"/>
</dbReference>
<dbReference type="PANTHER" id="PTHR42945">
    <property type="entry name" value="HISTIDINE BIOSYNTHESIS BIFUNCTIONAL PROTEIN"/>
    <property type="match status" value="1"/>
</dbReference>
<dbReference type="PANTHER" id="PTHR42945:SF11">
    <property type="entry name" value="PHOSPHORIBOSYL-AMP CYCLOHYDROLASE"/>
    <property type="match status" value="1"/>
</dbReference>
<dbReference type="Pfam" id="PF01502">
    <property type="entry name" value="PRA-CH"/>
    <property type="match status" value="1"/>
</dbReference>
<dbReference type="SUPFAM" id="SSF141734">
    <property type="entry name" value="HisI-like"/>
    <property type="match status" value="1"/>
</dbReference>
<organism>
    <name type="scientific">Mycolicibacterium smegmatis (strain ATCC 700084 / mc(2)155)</name>
    <name type="common">Mycobacterium smegmatis</name>
    <dbReference type="NCBI Taxonomy" id="246196"/>
    <lineage>
        <taxon>Bacteria</taxon>
        <taxon>Bacillati</taxon>
        <taxon>Actinomycetota</taxon>
        <taxon>Actinomycetes</taxon>
        <taxon>Mycobacteriales</taxon>
        <taxon>Mycobacteriaceae</taxon>
        <taxon>Mycolicibacterium</taxon>
    </lineage>
</organism>
<feature type="chain" id="PRO_1000063414" description="Phosphoribosyl-AMP cyclohydrolase">
    <location>
        <begin position="1"/>
        <end position="115"/>
    </location>
</feature>
<feature type="binding site" evidence="1">
    <location>
        <position position="80"/>
    </location>
    <ligand>
        <name>Mg(2+)</name>
        <dbReference type="ChEBI" id="CHEBI:18420"/>
    </ligand>
</feature>
<feature type="binding site" evidence="1">
    <location>
        <position position="81"/>
    </location>
    <ligand>
        <name>Zn(2+)</name>
        <dbReference type="ChEBI" id="CHEBI:29105"/>
        <note>ligand shared between dimeric partners</note>
    </ligand>
</feature>
<feature type="binding site" evidence="1">
    <location>
        <position position="82"/>
    </location>
    <ligand>
        <name>Mg(2+)</name>
        <dbReference type="ChEBI" id="CHEBI:18420"/>
    </ligand>
</feature>
<feature type="binding site" evidence="1">
    <location>
        <position position="84"/>
    </location>
    <ligand>
        <name>Mg(2+)</name>
        <dbReference type="ChEBI" id="CHEBI:18420"/>
    </ligand>
</feature>
<feature type="binding site" evidence="1">
    <location>
        <position position="97"/>
    </location>
    <ligand>
        <name>Zn(2+)</name>
        <dbReference type="ChEBI" id="CHEBI:29105"/>
        <note>ligand shared between dimeric partners</note>
    </ligand>
</feature>
<feature type="binding site" evidence="1">
    <location>
        <position position="104"/>
    </location>
    <ligand>
        <name>Zn(2+)</name>
        <dbReference type="ChEBI" id="CHEBI:29105"/>
        <note>ligand shared between dimeric partners</note>
    </ligand>
</feature>
<proteinExistence type="inferred from homology"/>
<name>HIS3_MYCS2</name>
<sequence>MSLDPAIAARLKRNADGLFAAVTQERGTGKVLMVAWMDDDALARTLQTREATYFSRSRGEQWVKGATSGHTQKVHSVRLDCDGDTVLLEVDQVGGACHTGDHTCFDADLLLGPDE</sequence>
<protein>
    <recommendedName>
        <fullName evidence="1">Phosphoribosyl-AMP cyclohydrolase</fullName>
        <shortName evidence="1">PRA-CH</shortName>
        <ecNumber evidence="1">3.5.4.19</ecNumber>
    </recommendedName>
</protein>
<comment type="function">
    <text evidence="1">Catalyzes the hydrolysis of the adenine ring of phosphoribosyl-AMP.</text>
</comment>
<comment type="catalytic activity">
    <reaction evidence="1">
        <text>1-(5-phospho-beta-D-ribosyl)-5'-AMP + H2O = 1-(5-phospho-beta-D-ribosyl)-5-[(5-phospho-beta-D-ribosylamino)methylideneamino]imidazole-4-carboxamide</text>
        <dbReference type="Rhea" id="RHEA:20049"/>
        <dbReference type="ChEBI" id="CHEBI:15377"/>
        <dbReference type="ChEBI" id="CHEBI:58435"/>
        <dbReference type="ChEBI" id="CHEBI:59457"/>
        <dbReference type="EC" id="3.5.4.19"/>
    </reaction>
</comment>
<comment type="cofactor">
    <cofactor evidence="1">
        <name>Mg(2+)</name>
        <dbReference type="ChEBI" id="CHEBI:18420"/>
    </cofactor>
    <text evidence="1">Binds 1 Mg(2+) ion per subunit.</text>
</comment>
<comment type="cofactor">
    <cofactor evidence="1">
        <name>Zn(2+)</name>
        <dbReference type="ChEBI" id="CHEBI:29105"/>
    </cofactor>
    <text evidence="1">Binds 1 zinc ion per subunit.</text>
</comment>
<comment type="pathway">
    <text evidence="1">Amino-acid biosynthesis; L-histidine biosynthesis; L-histidine from 5-phospho-alpha-D-ribose 1-diphosphate: step 3/9.</text>
</comment>
<comment type="subunit">
    <text evidence="1">Homodimer.</text>
</comment>
<comment type="subcellular location">
    <subcellularLocation>
        <location evidence="1">Cytoplasm</location>
    </subcellularLocation>
</comment>
<comment type="similarity">
    <text evidence="1">Belongs to the PRA-CH family.</text>
</comment>